<feature type="chain" id="PRO_0000423877" description="Ras-related protein Rap-1">
    <location>
        <begin position="1"/>
        <end position="188"/>
    </location>
</feature>
<feature type="short sequence motif" description="Effector region">
    <location>
        <begin position="32"/>
        <end position="40"/>
    </location>
</feature>
<feature type="binding site" evidence="1">
    <location>
        <begin position="10"/>
        <end position="17"/>
    </location>
    <ligand>
        <name>GTP</name>
        <dbReference type="ChEBI" id="CHEBI:37565"/>
    </ligand>
</feature>
<feature type="binding site" evidence="1">
    <location>
        <begin position="57"/>
        <end position="61"/>
    </location>
    <ligand>
        <name>GTP</name>
        <dbReference type="ChEBI" id="CHEBI:37565"/>
    </ligand>
</feature>
<feature type="binding site" evidence="1">
    <location>
        <begin position="116"/>
        <end position="119"/>
    </location>
    <ligand>
        <name>GTP</name>
        <dbReference type="ChEBI" id="CHEBI:37565"/>
    </ligand>
</feature>
<keyword id="KW-0342">GTP-binding</keyword>
<keyword id="KW-0378">Hydrolase</keyword>
<keyword id="KW-0547">Nucleotide-binding</keyword>
<keyword id="KW-1185">Reference proteome</keyword>
<proteinExistence type="inferred from homology"/>
<accession>Q18246</accession>
<comment type="function">
    <text evidence="3">Required in the hypodermis for proper formation of the cuticle.</text>
</comment>
<comment type="catalytic activity">
    <reaction evidence="2">
        <text>GTP + H2O = GDP + phosphate + H(+)</text>
        <dbReference type="Rhea" id="RHEA:19669"/>
        <dbReference type="ChEBI" id="CHEBI:15377"/>
        <dbReference type="ChEBI" id="CHEBI:15378"/>
        <dbReference type="ChEBI" id="CHEBI:37565"/>
        <dbReference type="ChEBI" id="CHEBI:43474"/>
        <dbReference type="ChEBI" id="CHEBI:58189"/>
        <dbReference type="EC" id="3.6.5.2"/>
    </reaction>
</comment>
<comment type="disruption phenotype">
    <text evidence="3">Worms are viable and fertile but display molting defect. Longitudinal ridges termed alae, which are cuticular structures secreted by lateral hypodermal seam cells, are poorly distinct or interrupted. Died as a 'bag of worms' after degeneration of the proximal gonad, or alternatively, as a result of a burst vulva.</text>
</comment>
<comment type="similarity">
    <text evidence="4">Belongs to the small GTPase superfamily. Ras family.</text>
</comment>
<organism>
    <name type="scientific">Caenorhabditis elegans</name>
    <dbReference type="NCBI Taxonomy" id="6239"/>
    <lineage>
        <taxon>Eukaryota</taxon>
        <taxon>Metazoa</taxon>
        <taxon>Ecdysozoa</taxon>
        <taxon>Nematoda</taxon>
        <taxon>Chromadorea</taxon>
        <taxon>Rhabditida</taxon>
        <taxon>Rhabditina</taxon>
        <taxon>Rhabditomorpha</taxon>
        <taxon>Rhabditoidea</taxon>
        <taxon>Rhabditidae</taxon>
        <taxon>Peloderinae</taxon>
        <taxon>Caenorhabditis</taxon>
    </lineage>
</organism>
<name>RAP1_CAEEL</name>
<reference key="1">
    <citation type="journal article" date="1998" name="Science">
        <title>Genome sequence of the nematode C. elegans: a platform for investigating biology.</title>
        <authorList>
            <consortium name="The C. elegans sequencing consortium"/>
        </authorList>
    </citation>
    <scope>NUCLEOTIDE SEQUENCE [LARGE SCALE GENOMIC DNA]</scope>
    <source>
        <strain>Bristol N2</strain>
    </source>
</reference>
<reference key="2">
    <citation type="journal article" date="2005" name="Mol. Biol. Cell">
        <title>Requirement of the Caenorhabditis elegans RapGEF pxf-1 and rap-1 for epithelial integrity.</title>
        <authorList>
            <person name="Berkel W.P."/>
            <person name="Verheijen M.H."/>
            <person name="Cuppen E."/>
            <person name="Asahina M."/>
            <person name="de Rooij J."/>
            <person name="Jansen G."/>
            <person name="Plasterk R.H."/>
            <person name="Bos J.L."/>
            <person name="Zwartkruis F.J."/>
        </authorList>
    </citation>
    <scope>FUNCTION</scope>
    <scope>DISRUPTION PHENOTYPE</scope>
</reference>
<sequence>MREYKIVVLGSGGVGKSALTVQFVQGIFVEKYDPTIEDSYRKQVEVDGQQCMLEILDTAGTEQFTAMRDLYMKNGQGFVLVYSITAQSTFNDLMDLRDQILRVKDTDEVPMILVGNKCDLEDERVVGKDQGQNLARQFGSAFLETSAKAKINVSEVFYDLVRQINRRYPESGRRQGQSNKQCCSCVIM</sequence>
<gene>
    <name type="primary">rap-1</name>
    <name type="ORF">C27B7.8</name>
</gene>
<dbReference type="EC" id="3.6.5.2" evidence="2"/>
<dbReference type="EMBL" id="Z54236">
    <property type="protein sequence ID" value="CAA90983.1"/>
    <property type="molecule type" value="Genomic_DNA"/>
</dbReference>
<dbReference type="PIR" id="T19507">
    <property type="entry name" value="T19507"/>
</dbReference>
<dbReference type="RefSeq" id="NP_501549.1">
    <property type="nucleotide sequence ID" value="NM_069148.5"/>
</dbReference>
<dbReference type="SMR" id="Q18246"/>
<dbReference type="BioGRID" id="42817">
    <property type="interactions" value="6"/>
</dbReference>
<dbReference type="FunCoup" id="Q18246">
    <property type="interactions" value="2097"/>
</dbReference>
<dbReference type="IntAct" id="Q18246">
    <property type="interactions" value="1"/>
</dbReference>
<dbReference type="STRING" id="6239.C27B7.8.1"/>
<dbReference type="PaxDb" id="6239-C27B7.8"/>
<dbReference type="PeptideAtlas" id="Q18246"/>
<dbReference type="EnsemblMetazoa" id="C27B7.8.1">
    <property type="protein sequence ID" value="C27B7.8.1"/>
    <property type="gene ID" value="WBGene00004307"/>
</dbReference>
<dbReference type="GeneID" id="177709"/>
<dbReference type="KEGG" id="cel:CELE_C27B7.8"/>
<dbReference type="UCSC" id="C27B7.8">
    <property type="organism name" value="c. elegans"/>
</dbReference>
<dbReference type="AGR" id="WB:WBGene00004307"/>
<dbReference type="CTD" id="177709"/>
<dbReference type="WormBase" id="C27B7.8">
    <property type="protein sequence ID" value="CE03037"/>
    <property type="gene ID" value="WBGene00004307"/>
    <property type="gene designation" value="rap-1"/>
</dbReference>
<dbReference type="eggNOG" id="KOG0395">
    <property type="taxonomic scope" value="Eukaryota"/>
</dbReference>
<dbReference type="GeneTree" id="ENSGT00940000164058"/>
<dbReference type="HOGENOM" id="CLU_041217_9_8_1"/>
<dbReference type="InParanoid" id="Q18246"/>
<dbReference type="OMA" id="MPLREFK"/>
<dbReference type="OrthoDB" id="5976022at2759"/>
<dbReference type="PhylomeDB" id="Q18246"/>
<dbReference type="Reactome" id="R-CEL-170968">
    <property type="pathway name" value="Frs2-mediated activation"/>
</dbReference>
<dbReference type="Reactome" id="R-CEL-354192">
    <property type="pathway name" value="Integrin signaling"/>
</dbReference>
<dbReference type="Reactome" id="R-CEL-354194">
    <property type="pathway name" value="GRB2:SOS provides linkage to MAPK signaling for Integrins"/>
</dbReference>
<dbReference type="Reactome" id="R-CEL-381676">
    <property type="pathway name" value="Glucagon-like Peptide-1 (GLP1) regulates insulin secretion"/>
</dbReference>
<dbReference type="Reactome" id="R-CEL-392517">
    <property type="pathway name" value="Rap1 signalling"/>
</dbReference>
<dbReference type="Reactome" id="R-CEL-5674135">
    <property type="pathway name" value="MAP2K and MAPK activation"/>
</dbReference>
<dbReference type="Reactome" id="R-CEL-6798695">
    <property type="pathway name" value="Neutrophil degranulation"/>
</dbReference>
<dbReference type="Reactome" id="R-CEL-8875555">
    <property type="pathway name" value="MET activates RAP1 and RAC1"/>
</dbReference>
<dbReference type="PRO" id="PR:Q18246"/>
<dbReference type="Proteomes" id="UP000001940">
    <property type="component" value="Chromosome IV"/>
</dbReference>
<dbReference type="Bgee" id="WBGene00004307">
    <property type="expression patterns" value="Expressed in embryo and 4 other cell types or tissues"/>
</dbReference>
<dbReference type="GO" id="GO:0005886">
    <property type="term" value="C:plasma membrane"/>
    <property type="evidence" value="ECO:0000318"/>
    <property type="project" value="GO_Central"/>
</dbReference>
<dbReference type="GO" id="GO:0003925">
    <property type="term" value="F:G protein activity"/>
    <property type="evidence" value="ECO:0007669"/>
    <property type="project" value="UniProtKB-EC"/>
</dbReference>
<dbReference type="GO" id="GO:0019003">
    <property type="term" value="F:GDP binding"/>
    <property type="evidence" value="ECO:0000318"/>
    <property type="project" value="GO_Central"/>
</dbReference>
<dbReference type="GO" id="GO:0005525">
    <property type="term" value="F:GTP binding"/>
    <property type="evidence" value="ECO:0000318"/>
    <property type="project" value="GO_Central"/>
</dbReference>
<dbReference type="GO" id="GO:0003924">
    <property type="term" value="F:GTPase activity"/>
    <property type="evidence" value="ECO:0000250"/>
    <property type="project" value="WormBase"/>
</dbReference>
<dbReference type="GO" id="GO:0071320">
    <property type="term" value="P:cellular response to cAMP"/>
    <property type="evidence" value="ECO:0000318"/>
    <property type="project" value="GO_Central"/>
</dbReference>
<dbReference type="GO" id="GO:0040002">
    <property type="term" value="P:collagen and cuticulin-based cuticle development"/>
    <property type="evidence" value="ECO:0000315"/>
    <property type="project" value="WormBase"/>
</dbReference>
<dbReference type="GO" id="GO:0008544">
    <property type="term" value="P:epidermis development"/>
    <property type="evidence" value="ECO:0000315"/>
    <property type="project" value="WormBase"/>
</dbReference>
<dbReference type="GO" id="GO:2000301">
    <property type="term" value="P:negative regulation of synaptic vesicle exocytosis"/>
    <property type="evidence" value="ECO:0000318"/>
    <property type="project" value="GO_Central"/>
</dbReference>
<dbReference type="GO" id="GO:0032486">
    <property type="term" value="P:Rap protein signal transduction"/>
    <property type="evidence" value="ECO:0000318"/>
    <property type="project" value="GO_Central"/>
</dbReference>
<dbReference type="CDD" id="cd04175">
    <property type="entry name" value="Rap1"/>
    <property type="match status" value="1"/>
</dbReference>
<dbReference type="FunFam" id="3.40.50.300:FF:000182">
    <property type="entry name" value="ras-related protein Rap-1b"/>
    <property type="match status" value="1"/>
</dbReference>
<dbReference type="Gene3D" id="3.40.50.300">
    <property type="entry name" value="P-loop containing nucleotide triphosphate hydrolases"/>
    <property type="match status" value="1"/>
</dbReference>
<dbReference type="InterPro" id="IPR027417">
    <property type="entry name" value="P-loop_NTPase"/>
</dbReference>
<dbReference type="InterPro" id="IPR038851">
    <property type="entry name" value="Rap1"/>
</dbReference>
<dbReference type="InterPro" id="IPR005225">
    <property type="entry name" value="Small_GTP-bd"/>
</dbReference>
<dbReference type="InterPro" id="IPR001806">
    <property type="entry name" value="Small_GTPase"/>
</dbReference>
<dbReference type="InterPro" id="IPR020849">
    <property type="entry name" value="Small_GTPase_Ras-type"/>
</dbReference>
<dbReference type="NCBIfam" id="TIGR00231">
    <property type="entry name" value="small_GTP"/>
    <property type="match status" value="1"/>
</dbReference>
<dbReference type="PANTHER" id="PTHR24070">
    <property type="entry name" value="RAS, DI-RAS, AND RHEB FAMILY MEMBERS OF SMALL GTPASE SUPERFAMILY"/>
    <property type="match status" value="1"/>
</dbReference>
<dbReference type="Pfam" id="PF00071">
    <property type="entry name" value="Ras"/>
    <property type="match status" value="1"/>
</dbReference>
<dbReference type="PRINTS" id="PR00449">
    <property type="entry name" value="RASTRNSFRMNG"/>
</dbReference>
<dbReference type="SMART" id="SM00175">
    <property type="entry name" value="RAB"/>
    <property type="match status" value="1"/>
</dbReference>
<dbReference type="SMART" id="SM00176">
    <property type="entry name" value="RAN"/>
    <property type="match status" value="1"/>
</dbReference>
<dbReference type="SMART" id="SM00173">
    <property type="entry name" value="RAS"/>
    <property type="match status" value="1"/>
</dbReference>
<dbReference type="SMART" id="SM00174">
    <property type="entry name" value="RHO"/>
    <property type="match status" value="1"/>
</dbReference>
<dbReference type="SUPFAM" id="SSF52540">
    <property type="entry name" value="P-loop containing nucleoside triphosphate hydrolases"/>
    <property type="match status" value="1"/>
</dbReference>
<dbReference type="PROSITE" id="PS51421">
    <property type="entry name" value="RAS"/>
    <property type="match status" value="1"/>
</dbReference>
<evidence type="ECO:0000250" key="1"/>
<evidence type="ECO:0000250" key="2">
    <source>
        <dbReference type="UniProtKB" id="P61224"/>
    </source>
</evidence>
<evidence type="ECO:0000269" key="3">
    <source>
    </source>
</evidence>
<evidence type="ECO:0000305" key="4"/>
<protein>
    <recommendedName>
        <fullName>Ras-related protein Rap-1</fullName>
        <ecNumber evidence="2">3.6.5.2</ecNumber>
    </recommendedName>
</protein>